<protein>
    <recommendedName>
        <fullName>Translation initiation factor 1A</fullName>
        <shortName>aIF-1A</shortName>
    </recommendedName>
</protein>
<reference key="1">
    <citation type="journal article" date="1997" name="Nature">
        <title>The complete genome sequence of the hyperthermophilic, sulphate-reducing archaeon Archaeoglobus fulgidus.</title>
        <authorList>
            <person name="Klenk H.-P."/>
            <person name="Clayton R.A."/>
            <person name="Tomb J.-F."/>
            <person name="White O."/>
            <person name="Nelson K.E."/>
            <person name="Ketchum K.A."/>
            <person name="Dodson R.J."/>
            <person name="Gwinn M.L."/>
            <person name="Hickey E.K."/>
            <person name="Peterson J.D."/>
            <person name="Richardson D.L."/>
            <person name="Kerlavage A.R."/>
            <person name="Graham D.E."/>
            <person name="Kyrpides N.C."/>
            <person name="Fleischmann R.D."/>
            <person name="Quackenbush J."/>
            <person name="Lee N.H."/>
            <person name="Sutton G.G."/>
            <person name="Gill S.R."/>
            <person name="Kirkness E.F."/>
            <person name="Dougherty B.A."/>
            <person name="McKenney K."/>
            <person name="Adams M.D."/>
            <person name="Loftus B.J."/>
            <person name="Peterson S.N."/>
            <person name="Reich C.I."/>
            <person name="McNeil L.K."/>
            <person name="Badger J.H."/>
            <person name="Glodek A."/>
            <person name="Zhou L."/>
            <person name="Overbeek R."/>
            <person name="Gocayne J.D."/>
            <person name="Weidman J.F."/>
            <person name="McDonald L.A."/>
            <person name="Utterback T.R."/>
            <person name="Cotton M.D."/>
            <person name="Spriggs T."/>
            <person name="Artiach P."/>
            <person name="Kaine B.P."/>
            <person name="Sykes S.M."/>
            <person name="Sadow P.W."/>
            <person name="D'Andrea K.P."/>
            <person name="Bowman C."/>
            <person name="Fujii C."/>
            <person name="Garland S.A."/>
            <person name="Mason T.M."/>
            <person name="Olsen G.J."/>
            <person name="Fraser C.M."/>
            <person name="Smith H.O."/>
            <person name="Woese C.R."/>
            <person name="Venter J.C."/>
        </authorList>
    </citation>
    <scope>NUCLEOTIDE SEQUENCE [LARGE SCALE GENOMIC DNA]</scope>
    <source>
        <strain>ATCC 49558 / DSM 4304 / JCM 9628 / NBRC 100126 / VC-16</strain>
    </source>
</reference>
<dbReference type="EMBL" id="AE000782">
    <property type="protein sequence ID" value="AAB90469.1"/>
    <property type="status" value="ALT_INIT"/>
    <property type="molecule type" value="Genomic_DNA"/>
</dbReference>
<dbReference type="PIR" id="A69347">
    <property type="entry name" value="A69347"/>
</dbReference>
<dbReference type="RefSeq" id="WP_048064286.1">
    <property type="nucleotide sequence ID" value="NC_000917.1"/>
</dbReference>
<dbReference type="SMR" id="O29481"/>
<dbReference type="STRING" id="224325.AF_0777"/>
<dbReference type="PaxDb" id="224325-AF_0777"/>
<dbReference type="EnsemblBacteria" id="AAB90469">
    <property type="protein sequence ID" value="AAB90469"/>
    <property type="gene ID" value="AF_0777"/>
</dbReference>
<dbReference type="GeneID" id="24794374"/>
<dbReference type="KEGG" id="afu:AF_0777"/>
<dbReference type="eggNOG" id="arCOG01179">
    <property type="taxonomic scope" value="Archaea"/>
</dbReference>
<dbReference type="HOGENOM" id="CLU_109098_1_2_2"/>
<dbReference type="OrthoDB" id="2586at2157"/>
<dbReference type="PhylomeDB" id="O29481"/>
<dbReference type="Proteomes" id="UP000002199">
    <property type="component" value="Chromosome"/>
</dbReference>
<dbReference type="GO" id="GO:0003723">
    <property type="term" value="F:RNA binding"/>
    <property type="evidence" value="ECO:0007669"/>
    <property type="project" value="InterPro"/>
</dbReference>
<dbReference type="GO" id="GO:0003743">
    <property type="term" value="F:translation initiation factor activity"/>
    <property type="evidence" value="ECO:0007669"/>
    <property type="project" value="UniProtKB-UniRule"/>
</dbReference>
<dbReference type="CDD" id="cd05793">
    <property type="entry name" value="S1_IF1A"/>
    <property type="match status" value="1"/>
</dbReference>
<dbReference type="Gene3D" id="2.40.50.140">
    <property type="entry name" value="Nucleic acid-binding proteins"/>
    <property type="match status" value="1"/>
</dbReference>
<dbReference type="HAMAP" id="MF_00216">
    <property type="entry name" value="aIF_1A"/>
    <property type="match status" value="1"/>
</dbReference>
<dbReference type="InterPro" id="IPR012340">
    <property type="entry name" value="NA-bd_OB-fold"/>
</dbReference>
<dbReference type="InterPro" id="IPR006196">
    <property type="entry name" value="RNA-binding_domain_S1_IF1"/>
</dbReference>
<dbReference type="InterPro" id="IPR001253">
    <property type="entry name" value="TIF_eIF-1A"/>
</dbReference>
<dbReference type="InterPro" id="IPR018104">
    <property type="entry name" value="TIF_eIF-1A_CS"/>
</dbReference>
<dbReference type="NCBIfam" id="TIGR00523">
    <property type="entry name" value="eIF-1A"/>
    <property type="match status" value="1"/>
</dbReference>
<dbReference type="NCBIfam" id="NF003084">
    <property type="entry name" value="PRK04012.1-3"/>
    <property type="match status" value="1"/>
</dbReference>
<dbReference type="NCBIfam" id="NF003085">
    <property type="entry name" value="PRK04012.1-5"/>
    <property type="match status" value="1"/>
</dbReference>
<dbReference type="PANTHER" id="PTHR21668">
    <property type="entry name" value="EIF-1A"/>
    <property type="match status" value="1"/>
</dbReference>
<dbReference type="Pfam" id="PF01176">
    <property type="entry name" value="eIF-1a"/>
    <property type="match status" value="1"/>
</dbReference>
<dbReference type="SMART" id="SM00652">
    <property type="entry name" value="eIF1a"/>
    <property type="match status" value="1"/>
</dbReference>
<dbReference type="SUPFAM" id="SSF50249">
    <property type="entry name" value="Nucleic acid-binding proteins"/>
    <property type="match status" value="1"/>
</dbReference>
<dbReference type="PROSITE" id="PS01262">
    <property type="entry name" value="IF1A"/>
    <property type="match status" value="1"/>
</dbReference>
<dbReference type="PROSITE" id="PS50832">
    <property type="entry name" value="S1_IF1_TYPE"/>
    <property type="match status" value="1"/>
</dbReference>
<comment type="function">
    <text evidence="1">Seems to be required for maximal rate of protein biosynthesis. Enhances ribosome dissociation into subunits and stabilizes the binding of the initiator Met-tRNA(I) to 40 S ribosomal subunits (By similarity).</text>
</comment>
<comment type="similarity">
    <text evidence="2">Belongs to the eIF-1A family.</text>
</comment>
<comment type="sequence caution" evidence="2">
    <conflict type="erroneous initiation">
        <sequence resource="EMBL-CDS" id="AAB90469"/>
    </conflict>
</comment>
<sequence length="97" mass="11385">MSSEDDVIRVRLPDRKKGELFGVVTSMLGAGHIKVRCEDGVERLARIPGKMRKKIWIREGDVVIVVPWSFQKDRADIVWRYTNPQVEWLERKGYLKF</sequence>
<feature type="chain" id="PRO_0000145115" description="Translation initiation factor 1A">
    <location>
        <begin position="1"/>
        <end position="97"/>
    </location>
</feature>
<feature type="domain" description="S1-like">
    <location>
        <begin position="8"/>
        <end position="82"/>
    </location>
</feature>
<gene>
    <name type="primary">eIF1A</name>
    <name type="ordered locus">AF_0777</name>
</gene>
<name>IF1A_ARCFU</name>
<keyword id="KW-0396">Initiation factor</keyword>
<keyword id="KW-0648">Protein biosynthesis</keyword>
<keyword id="KW-1185">Reference proteome</keyword>
<evidence type="ECO:0000250" key="1"/>
<evidence type="ECO:0000305" key="2"/>
<organism>
    <name type="scientific">Archaeoglobus fulgidus (strain ATCC 49558 / DSM 4304 / JCM 9628 / NBRC 100126 / VC-16)</name>
    <dbReference type="NCBI Taxonomy" id="224325"/>
    <lineage>
        <taxon>Archaea</taxon>
        <taxon>Methanobacteriati</taxon>
        <taxon>Methanobacteriota</taxon>
        <taxon>Archaeoglobi</taxon>
        <taxon>Archaeoglobales</taxon>
        <taxon>Archaeoglobaceae</taxon>
        <taxon>Archaeoglobus</taxon>
    </lineage>
</organism>
<accession>O29481</accession>
<proteinExistence type="inferred from homology"/>